<reference key="1">
    <citation type="journal article" date="2000" name="Science">
        <title>Complete genome sequence of Neisseria meningitidis serogroup B strain MC58.</title>
        <authorList>
            <person name="Tettelin H."/>
            <person name="Saunders N.J."/>
            <person name="Heidelberg J.F."/>
            <person name="Jeffries A.C."/>
            <person name="Nelson K.E."/>
            <person name="Eisen J.A."/>
            <person name="Ketchum K.A."/>
            <person name="Hood D.W."/>
            <person name="Peden J.F."/>
            <person name="Dodson R.J."/>
            <person name="Nelson W.C."/>
            <person name="Gwinn M.L."/>
            <person name="DeBoy R.T."/>
            <person name="Peterson J.D."/>
            <person name="Hickey E.K."/>
            <person name="Haft D.H."/>
            <person name="Salzberg S.L."/>
            <person name="White O."/>
            <person name="Fleischmann R.D."/>
            <person name="Dougherty B.A."/>
            <person name="Mason T.M."/>
            <person name="Ciecko A."/>
            <person name="Parksey D.S."/>
            <person name="Blair E."/>
            <person name="Cittone H."/>
            <person name="Clark E.B."/>
            <person name="Cotton M.D."/>
            <person name="Utterback T.R."/>
            <person name="Khouri H.M."/>
            <person name="Qin H."/>
            <person name="Vamathevan J.J."/>
            <person name="Gill J."/>
            <person name="Scarlato V."/>
            <person name="Masignani V."/>
            <person name="Pizza M."/>
            <person name="Grandi G."/>
            <person name="Sun L."/>
            <person name="Smith H.O."/>
            <person name="Fraser C.M."/>
            <person name="Moxon E.R."/>
            <person name="Rappuoli R."/>
            <person name="Venter J.C."/>
        </authorList>
    </citation>
    <scope>NUCLEOTIDE SEQUENCE [LARGE SCALE GENOMIC DNA]</scope>
    <source>
        <strain>ATCC BAA-335 / MC58</strain>
    </source>
</reference>
<proteinExistence type="inferred from homology"/>
<feature type="chain" id="PRO_0000386084" description="GTPase Obg">
    <location>
        <begin position="1"/>
        <end position="384"/>
    </location>
</feature>
<feature type="domain" description="Obg" evidence="2">
    <location>
        <begin position="1"/>
        <end position="159"/>
    </location>
</feature>
<feature type="domain" description="OBG-type G" evidence="1">
    <location>
        <begin position="160"/>
        <end position="348"/>
    </location>
</feature>
<feature type="region of interest" description="Disordered" evidence="3">
    <location>
        <begin position="20"/>
        <end position="46"/>
    </location>
</feature>
<feature type="compositionally biased region" description="Gly residues" evidence="3">
    <location>
        <begin position="33"/>
        <end position="43"/>
    </location>
</feature>
<feature type="binding site" evidence="1">
    <location>
        <begin position="166"/>
        <end position="173"/>
    </location>
    <ligand>
        <name>GTP</name>
        <dbReference type="ChEBI" id="CHEBI:37565"/>
    </ligand>
</feature>
<feature type="binding site" evidence="1">
    <location>
        <position position="173"/>
    </location>
    <ligand>
        <name>Mg(2+)</name>
        <dbReference type="ChEBI" id="CHEBI:18420"/>
    </ligand>
</feature>
<feature type="binding site" evidence="1">
    <location>
        <begin position="191"/>
        <end position="195"/>
    </location>
    <ligand>
        <name>GTP</name>
        <dbReference type="ChEBI" id="CHEBI:37565"/>
    </ligand>
</feature>
<feature type="binding site" evidence="1">
    <location>
        <position position="193"/>
    </location>
    <ligand>
        <name>Mg(2+)</name>
        <dbReference type="ChEBI" id="CHEBI:18420"/>
    </ligand>
</feature>
<feature type="binding site" evidence="1">
    <location>
        <begin position="213"/>
        <end position="216"/>
    </location>
    <ligand>
        <name>GTP</name>
        <dbReference type="ChEBI" id="CHEBI:37565"/>
    </ligand>
</feature>
<feature type="binding site" evidence="1">
    <location>
        <begin position="284"/>
        <end position="287"/>
    </location>
    <ligand>
        <name>GTP</name>
        <dbReference type="ChEBI" id="CHEBI:37565"/>
    </ligand>
</feature>
<feature type="binding site" evidence="1">
    <location>
        <begin position="329"/>
        <end position="331"/>
    </location>
    <ligand>
        <name>GTP</name>
        <dbReference type="ChEBI" id="CHEBI:37565"/>
    </ligand>
</feature>
<protein>
    <recommendedName>
        <fullName evidence="1">GTPase Obg</fullName>
        <ecNumber evidence="1">3.6.5.-</ecNumber>
    </recommendedName>
    <alternativeName>
        <fullName evidence="1">GTP-binding protein Obg</fullName>
    </alternativeName>
</protein>
<gene>
    <name evidence="1" type="primary">obg</name>
    <name type="ordered locus">NMB2086</name>
</gene>
<name>OBG_NEIMB</name>
<comment type="function">
    <text evidence="1">An essential GTPase which binds GTP, GDP and possibly (p)ppGpp with moderate affinity, with high nucleotide exchange rates and a fairly low GTP hydrolysis rate. Plays a role in control of the cell cycle, stress response, ribosome biogenesis and in those bacteria that undergo differentiation, in morphogenesis control.</text>
</comment>
<comment type="cofactor">
    <cofactor evidence="1">
        <name>Mg(2+)</name>
        <dbReference type="ChEBI" id="CHEBI:18420"/>
    </cofactor>
</comment>
<comment type="subunit">
    <text evidence="1">Monomer.</text>
</comment>
<comment type="subcellular location">
    <subcellularLocation>
        <location evidence="1">Cytoplasm</location>
    </subcellularLocation>
</comment>
<comment type="similarity">
    <text evidence="1">Belongs to the TRAFAC class OBG-HflX-like GTPase superfamily. OBG GTPase family.</text>
</comment>
<evidence type="ECO:0000255" key="1">
    <source>
        <dbReference type="HAMAP-Rule" id="MF_01454"/>
    </source>
</evidence>
<evidence type="ECO:0000255" key="2">
    <source>
        <dbReference type="PROSITE-ProRule" id="PRU01231"/>
    </source>
</evidence>
<evidence type="ECO:0000256" key="3">
    <source>
        <dbReference type="SAM" id="MobiDB-lite"/>
    </source>
</evidence>
<dbReference type="EC" id="3.6.5.-" evidence="1"/>
<dbReference type="EMBL" id="AE002098">
    <property type="protein sequence ID" value="AAF42403.1"/>
    <property type="molecule type" value="Genomic_DNA"/>
</dbReference>
<dbReference type="PIR" id="D81007">
    <property type="entry name" value="D81007"/>
</dbReference>
<dbReference type="RefSeq" id="NP_275074.1">
    <property type="nucleotide sequence ID" value="NC_003112.2"/>
</dbReference>
<dbReference type="SMR" id="Q9JXE5"/>
<dbReference type="FunCoup" id="Q9JXE5">
    <property type="interactions" value="488"/>
</dbReference>
<dbReference type="STRING" id="122586.NMB2086"/>
<dbReference type="PaxDb" id="122586-NMB2086"/>
<dbReference type="KEGG" id="nme:NMB2086"/>
<dbReference type="PATRIC" id="fig|122586.8.peg.2666"/>
<dbReference type="HOGENOM" id="CLU_011747_2_0_4"/>
<dbReference type="InParanoid" id="Q9JXE5"/>
<dbReference type="OrthoDB" id="9807318at2"/>
<dbReference type="Proteomes" id="UP000000425">
    <property type="component" value="Chromosome"/>
</dbReference>
<dbReference type="GO" id="GO:0005737">
    <property type="term" value="C:cytoplasm"/>
    <property type="evidence" value="ECO:0007669"/>
    <property type="project" value="UniProtKB-SubCell"/>
</dbReference>
<dbReference type="GO" id="GO:0005525">
    <property type="term" value="F:GTP binding"/>
    <property type="evidence" value="ECO:0000318"/>
    <property type="project" value="GO_Central"/>
</dbReference>
<dbReference type="GO" id="GO:0003924">
    <property type="term" value="F:GTPase activity"/>
    <property type="evidence" value="ECO:0000318"/>
    <property type="project" value="GO_Central"/>
</dbReference>
<dbReference type="GO" id="GO:0000287">
    <property type="term" value="F:magnesium ion binding"/>
    <property type="evidence" value="ECO:0007669"/>
    <property type="project" value="InterPro"/>
</dbReference>
<dbReference type="GO" id="GO:0042254">
    <property type="term" value="P:ribosome biogenesis"/>
    <property type="evidence" value="ECO:0007669"/>
    <property type="project" value="UniProtKB-UniRule"/>
</dbReference>
<dbReference type="CDD" id="cd01898">
    <property type="entry name" value="Obg"/>
    <property type="match status" value="1"/>
</dbReference>
<dbReference type="FunFam" id="2.70.210.12:FF:000001">
    <property type="entry name" value="GTPase Obg"/>
    <property type="match status" value="1"/>
</dbReference>
<dbReference type="FunFam" id="3.40.50.300:FF:000185">
    <property type="entry name" value="GTPase Obg"/>
    <property type="match status" value="1"/>
</dbReference>
<dbReference type="Gene3D" id="2.70.210.12">
    <property type="entry name" value="GTP1/OBG domain"/>
    <property type="match status" value="1"/>
</dbReference>
<dbReference type="Gene3D" id="3.40.50.300">
    <property type="entry name" value="P-loop containing nucleotide triphosphate hydrolases"/>
    <property type="match status" value="1"/>
</dbReference>
<dbReference type="HAMAP" id="MF_01454">
    <property type="entry name" value="GTPase_Obg"/>
    <property type="match status" value="1"/>
</dbReference>
<dbReference type="InterPro" id="IPR031167">
    <property type="entry name" value="G_OBG"/>
</dbReference>
<dbReference type="InterPro" id="IPR006073">
    <property type="entry name" value="GTP-bd"/>
</dbReference>
<dbReference type="InterPro" id="IPR014100">
    <property type="entry name" value="GTP-bd_Obg/CgtA"/>
</dbReference>
<dbReference type="InterPro" id="IPR006074">
    <property type="entry name" value="GTP1-OBG_CS"/>
</dbReference>
<dbReference type="InterPro" id="IPR006169">
    <property type="entry name" value="GTP1_OBG_dom"/>
</dbReference>
<dbReference type="InterPro" id="IPR036726">
    <property type="entry name" value="GTP1_OBG_dom_sf"/>
</dbReference>
<dbReference type="InterPro" id="IPR045086">
    <property type="entry name" value="OBG_GTPase"/>
</dbReference>
<dbReference type="InterPro" id="IPR027417">
    <property type="entry name" value="P-loop_NTPase"/>
</dbReference>
<dbReference type="NCBIfam" id="TIGR02729">
    <property type="entry name" value="Obg_CgtA"/>
    <property type="match status" value="1"/>
</dbReference>
<dbReference type="NCBIfam" id="NF008955">
    <property type="entry name" value="PRK12297.1"/>
    <property type="match status" value="1"/>
</dbReference>
<dbReference type="NCBIfam" id="NF008956">
    <property type="entry name" value="PRK12299.1"/>
    <property type="match status" value="1"/>
</dbReference>
<dbReference type="PANTHER" id="PTHR11702">
    <property type="entry name" value="DEVELOPMENTALLY REGULATED GTP-BINDING PROTEIN-RELATED"/>
    <property type="match status" value="1"/>
</dbReference>
<dbReference type="PANTHER" id="PTHR11702:SF31">
    <property type="entry name" value="MITOCHONDRIAL RIBOSOME-ASSOCIATED GTPASE 2"/>
    <property type="match status" value="1"/>
</dbReference>
<dbReference type="Pfam" id="PF01018">
    <property type="entry name" value="GTP1_OBG"/>
    <property type="match status" value="1"/>
</dbReference>
<dbReference type="Pfam" id="PF01926">
    <property type="entry name" value="MMR_HSR1"/>
    <property type="match status" value="1"/>
</dbReference>
<dbReference type="PIRSF" id="PIRSF002401">
    <property type="entry name" value="GTP_bd_Obg/CgtA"/>
    <property type="match status" value="1"/>
</dbReference>
<dbReference type="PRINTS" id="PR00326">
    <property type="entry name" value="GTP1OBG"/>
</dbReference>
<dbReference type="SUPFAM" id="SSF82051">
    <property type="entry name" value="Obg GTP-binding protein N-terminal domain"/>
    <property type="match status" value="1"/>
</dbReference>
<dbReference type="SUPFAM" id="SSF52540">
    <property type="entry name" value="P-loop containing nucleoside triphosphate hydrolases"/>
    <property type="match status" value="1"/>
</dbReference>
<dbReference type="PROSITE" id="PS51710">
    <property type="entry name" value="G_OBG"/>
    <property type="match status" value="1"/>
</dbReference>
<dbReference type="PROSITE" id="PS00905">
    <property type="entry name" value="GTP1_OBG"/>
    <property type="match status" value="1"/>
</dbReference>
<dbReference type="PROSITE" id="PS51883">
    <property type="entry name" value="OBG"/>
    <property type="match status" value="1"/>
</dbReference>
<organism>
    <name type="scientific">Neisseria meningitidis serogroup B (strain ATCC BAA-335 / MC58)</name>
    <dbReference type="NCBI Taxonomy" id="122586"/>
    <lineage>
        <taxon>Bacteria</taxon>
        <taxon>Pseudomonadati</taxon>
        <taxon>Pseudomonadota</taxon>
        <taxon>Betaproteobacteria</taxon>
        <taxon>Neisseriales</taxon>
        <taxon>Neisseriaceae</taxon>
        <taxon>Neisseria</taxon>
    </lineage>
</organism>
<keyword id="KW-0963">Cytoplasm</keyword>
<keyword id="KW-0342">GTP-binding</keyword>
<keyword id="KW-0378">Hydrolase</keyword>
<keyword id="KW-0460">Magnesium</keyword>
<keyword id="KW-0479">Metal-binding</keyword>
<keyword id="KW-0547">Nucleotide-binding</keyword>
<keyword id="KW-1185">Reference proteome</keyword>
<accession>Q9JXE5</accession>
<sequence>MKFIDEAKIEVAAGKGGNGATSFRREKFVPRGGPDGGDGGKGGSVWAEADENTNTLVEYRFVKRYQAKNGEKGHGSDRYGAGADDIVLKMPVGTLIRDLDTGETVADLTYHGQRVCLAKGGKGGLGNIHFKSSVNRAPKQSTPGEEGEARSLQLELKVLADVGLLGMPNAGKSTLITAVSAARPKIANYPFTTLHPNLGVVRIDENHSFVMADIPGLIEGAAEGAGLGHRFLKHLSRTGLLLHVVDLAPFDETVNPAEEALAIINELRKYDEELYGKPRWLVLNKLDMLDEEEAQTRTAAFLEAVGWDYPKPDDRFQFDMETPRLFQISALTHQGTQELVHQINQYLTEKKRIEAEKAEAEKAAANVEIIEQQPKTDTGVFKPE</sequence>